<reference key="1">
    <citation type="journal article" date="2009" name="PLoS Genet.">
        <title>Organised genome dynamics in the Escherichia coli species results in highly diverse adaptive paths.</title>
        <authorList>
            <person name="Touchon M."/>
            <person name="Hoede C."/>
            <person name="Tenaillon O."/>
            <person name="Barbe V."/>
            <person name="Baeriswyl S."/>
            <person name="Bidet P."/>
            <person name="Bingen E."/>
            <person name="Bonacorsi S."/>
            <person name="Bouchier C."/>
            <person name="Bouvet O."/>
            <person name="Calteau A."/>
            <person name="Chiapello H."/>
            <person name="Clermont O."/>
            <person name="Cruveiller S."/>
            <person name="Danchin A."/>
            <person name="Diard M."/>
            <person name="Dossat C."/>
            <person name="Karoui M.E."/>
            <person name="Frapy E."/>
            <person name="Garry L."/>
            <person name="Ghigo J.M."/>
            <person name="Gilles A.M."/>
            <person name="Johnson J."/>
            <person name="Le Bouguenec C."/>
            <person name="Lescat M."/>
            <person name="Mangenot S."/>
            <person name="Martinez-Jehanne V."/>
            <person name="Matic I."/>
            <person name="Nassif X."/>
            <person name="Oztas S."/>
            <person name="Petit M.A."/>
            <person name="Pichon C."/>
            <person name="Rouy Z."/>
            <person name="Ruf C.S."/>
            <person name="Schneider D."/>
            <person name="Tourret J."/>
            <person name="Vacherie B."/>
            <person name="Vallenet D."/>
            <person name="Medigue C."/>
            <person name="Rocha E.P.C."/>
            <person name="Denamur E."/>
        </authorList>
    </citation>
    <scope>NUCLEOTIDE SEQUENCE [LARGE SCALE GENOMIC DNA]</scope>
    <source>
        <strain>IAI1</strain>
    </source>
</reference>
<proteinExistence type="inferred from homology"/>
<comment type="similarity">
    <text evidence="1">Belongs to the UPF0319 family.</text>
</comment>
<keyword id="KW-0732">Signal</keyword>
<feature type="signal peptide" evidence="1">
    <location>
        <begin position="1"/>
        <end position="20"/>
    </location>
</feature>
<feature type="chain" id="PRO_1000200490" description="UPF0319 protein YccT">
    <location>
        <begin position="21"/>
        <end position="220"/>
    </location>
</feature>
<sequence length="220" mass="24594">MKTGIVTTLIALCLPVSVFATTLRLSTDVDLLVLDGKKVSSSLLRGADSIELDNGPHQLVFRVEKTIHLSNSEERLYISPPLVVSFNTQLINQVNFRLPRLENEREANHFDAAPRLELLDGDATPIPVKLDILAITSTAKTIDYEVEVERYNKSAKRASLPQFATMMADDSTLLSGVSELDAIPPQSQVLTEQRLKYWFKLADPQTRNTFLQWAEKQPSS</sequence>
<dbReference type="EMBL" id="CU928160">
    <property type="protein sequence ID" value="CAQ97869.1"/>
    <property type="molecule type" value="Genomic_DNA"/>
</dbReference>
<dbReference type="RefSeq" id="WP_000847791.1">
    <property type="nucleotide sequence ID" value="NC_011741.1"/>
</dbReference>
<dbReference type="KEGG" id="ecr:ECIAI1_1005"/>
<dbReference type="HOGENOM" id="CLU_073782_2_0_6"/>
<dbReference type="HAMAP" id="MF_00789">
    <property type="entry name" value="UPF0319"/>
    <property type="match status" value="1"/>
</dbReference>
<dbReference type="InterPro" id="IPR018635">
    <property type="entry name" value="UPF0319"/>
</dbReference>
<dbReference type="NCBIfam" id="NF047712">
    <property type="entry name" value="CrliSynInhib"/>
    <property type="match status" value="1"/>
</dbReference>
<dbReference type="NCBIfam" id="NF002967">
    <property type="entry name" value="PRK03641.1"/>
    <property type="match status" value="1"/>
</dbReference>
<dbReference type="PANTHER" id="PTHR38108">
    <property type="entry name" value="UPF0319 PROTEIN YCCT"/>
    <property type="match status" value="1"/>
</dbReference>
<dbReference type="PANTHER" id="PTHR38108:SF1">
    <property type="entry name" value="UPF0319 PROTEIN YCCT"/>
    <property type="match status" value="1"/>
</dbReference>
<dbReference type="Pfam" id="PF09829">
    <property type="entry name" value="DUF2057"/>
    <property type="match status" value="1"/>
</dbReference>
<evidence type="ECO:0000255" key="1">
    <source>
        <dbReference type="HAMAP-Rule" id="MF_00789"/>
    </source>
</evidence>
<gene>
    <name evidence="1" type="primary">yccT</name>
    <name type="ordered locus">ECIAI1_1005</name>
</gene>
<protein>
    <recommendedName>
        <fullName evidence="1">UPF0319 protein YccT</fullName>
    </recommendedName>
</protein>
<accession>B7M893</accession>
<name>YCCT_ECO8A</name>
<organism>
    <name type="scientific">Escherichia coli O8 (strain IAI1)</name>
    <dbReference type="NCBI Taxonomy" id="585034"/>
    <lineage>
        <taxon>Bacteria</taxon>
        <taxon>Pseudomonadati</taxon>
        <taxon>Pseudomonadota</taxon>
        <taxon>Gammaproteobacteria</taxon>
        <taxon>Enterobacterales</taxon>
        <taxon>Enterobacteriaceae</taxon>
        <taxon>Escherichia</taxon>
    </lineage>
</organism>